<dbReference type="EMBL" id="AY707503">
    <property type="protein sequence ID" value="AAU11295.1"/>
    <property type="molecule type" value="Genomic_DNA"/>
</dbReference>
<dbReference type="EMBL" id="AY707500">
    <property type="protein sequence ID" value="AAU11295.1"/>
    <property type="status" value="JOINED"/>
    <property type="molecule type" value="Genomic_DNA"/>
</dbReference>
<dbReference type="EMBL" id="AY707501">
    <property type="protein sequence ID" value="AAU11295.1"/>
    <property type="status" value="JOINED"/>
    <property type="molecule type" value="Genomic_DNA"/>
</dbReference>
<dbReference type="EMBL" id="AY707502">
    <property type="protein sequence ID" value="AAU11295.1"/>
    <property type="status" value="JOINED"/>
    <property type="molecule type" value="Genomic_DNA"/>
</dbReference>
<dbReference type="SMR" id="Q66S58"/>
<dbReference type="GO" id="GO:0005581">
    <property type="term" value="C:collagen trimer"/>
    <property type="evidence" value="ECO:0007669"/>
    <property type="project" value="UniProtKB-KW"/>
</dbReference>
<dbReference type="GO" id="GO:0005615">
    <property type="term" value="C:extracellular space"/>
    <property type="evidence" value="ECO:0007669"/>
    <property type="project" value="TreeGrafter"/>
</dbReference>
<dbReference type="GO" id="GO:0005771">
    <property type="term" value="C:multivesicular body"/>
    <property type="evidence" value="ECO:0007669"/>
    <property type="project" value="TreeGrafter"/>
</dbReference>
<dbReference type="GO" id="GO:0005537">
    <property type="term" value="F:D-mannose binding"/>
    <property type="evidence" value="ECO:0007669"/>
    <property type="project" value="UniProtKB-KW"/>
</dbReference>
<dbReference type="GO" id="GO:0006958">
    <property type="term" value="P:complement activation, classical pathway"/>
    <property type="evidence" value="ECO:0007669"/>
    <property type="project" value="UniProtKB-KW"/>
</dbReference>
<dbReference type="GO" id="GO:0001867">
    <property type="term" value="P:complement activation, lectin pathway"/>
    <property type="evidence" value="ECO:0007669"/>
    <property type="project" value="UniProtKB-KW"/>
</dbReference>
<dbReference type="CDD" id="cd03591">
    <property type="entry name" value="CLECT_collectin_like"/>
    <property type="match status" value="1"/>
</dbReference>
<dbReference type="FunFam" id="3.10.100.10:FF:000088">
    <property type="entry name" value="Mannose-binding protein A"/>
    <property type="match status" value="1"/>
</dbReference>
<dbReference type="Gene3D" id="3.10.100.10">
    <property type="entry name" value="Mannose-Binding Protein A, subunit A"/>
    <property type="match status" value="1"/>
</dbReference>
<dbReference type="InterPro" id="IPR001304">
    <property type="entry name" value="C-type_lectin-like"/>
</dbReference>
<dbReference type="InterPro" id="IPR016186">
    <property type="entry name" value="C-type_lectin-like/link_sf"/>
</dbReference>
<dbReference type="InterPro" id="IPR018378">
    <property type="entry name" value="C-type_lectin_CS"/>
</dbReference>
<dbReference type="InterPro" id="IPR051077">
    <property type="entry name" value="Ca-dependent_lectin"/>
</dbReference>
<dbReference type="InterPro" id="IPR008160">
    <property type="entry name" value="Collagen"/>
</dbReference>
<dbReference type="InterPro" id="IPR033990">
    <property type="entry name" value="Collectin_CTLD"/>
</dbReference>
<dbReference type="InterPro" id="IPR016187">
    <property type="entry name" value="CTDL_fold"/>
</dbReference>
<dbReference type="PANTHER" id="PTHR24024:SF34">
    <property type="entry name" value="MANNOSE-BINDING PROTEIN C"/>
    <property type="match status" value="1"/>
</dbReference>
<dbReference type="PANTHER" id="PTHR24024">
    <property type="entry name" value="PULMONARY SURFACTANT-ASSOCIATED PROTEIN A"/>
    <property type="match status" value="1"/>
</dbReference>
<dbReference type="Pfam" id="PF01391">
    <property type="entry name" value="Collagen"/>
    <property type="match status" value="1"/>
</dbReference>
<dbReference type="Pfam" id="PF00059">
    <property type="entry name" value="Lectin_C"/>
    <property type="match status" value="1"/>
</dbReference>
<dbReference type="SMART" id="SM00034">
    <property type="entry name" value="CLECT"/>
    <property type="match status" value="1"/>
</dbReference>
<dbReference type="SUPFAM" id="SSF56436">
    <property type="entry name" value="C-type lectin-like"/>
    <property type="match status" value="1"/>
</dbReference>
<dbReference type="SUPFAM" id="SSF57944">
    <property type="entry name" value="Triple coiled coil domain of C-type lectins"/>
    <property type="match status" value="1"/>
</dbReference>
<dbReference type="PROSITE" id="PS00615">
    <property type="entry name" value="C_TYPE_LECTIN_1"/>
    <property type="match status" value="1"/>
</dbReference>
<dbReference type="PROSITE" id="PS50041">
    <property type="entry name" value="C_TYPE_LECTIN_2"/>
    <property type="match status" value="1"/>
</dbReference>
<accession>Q66S58</accession>
<proteinExistence type="inferred from homology"/>
<evidence type="ECO:0000250" key="1"/>
<evidence type="ECO:0000255" key="2">
    <source>
        <dbReference type="PROSITE-ProRule" id="PRU00040"/>
    </source>
</evidence>
<evidence type="ECO:0000256" key="3">
    <source>
        <dbReference type="SAM" id="MobiDB-lite"/>
    </source>
</evidence>
<sequence length="248" mass="26355">MSLIPSLSLLLMSMVAASYSETVTCEDAQKTCPAVIACSSPGINGFPGKDGRDGTKGEKGEPGQGLRGLQGPPGKLGPPGNPGPSGSPGPKGQKGDPGNSPDCDSSLAVSERKALQTEMARIKKWLTFSLGKQVGNKFFLTNGEMMTFEKVKALCVKFQASVATPRNAAENRAIQNLIKEEAFMGITDEKTEGQFVDLTGNRLTYTNWNEGEPNNAGSDEDCVLLLRNGRWNDVPCSSSHLAVCEFPI</sequence>
<feature type="signal peptide" evidence="1">
    <location>
        <begin position="1"/>
        <end position="20"/>
    </location>
</feature>
<feature type="chain" id="PRO_0000017402" description="Mannose-binding protein C">
    <location>
        <begin position="21"/>
        <end position="248"/>
    </location>
</feature>
<feature type="domain" description="Collagen-like">
    <location>
        <begin position="42"/>
        <end position="99"/>
    </location>
</feature>
<feature type="domain" description="C-type lectin" evidence="2">
    <location>
        <begin position="134"/>
        <end position="245"/>
    </location>
</feature>
<feature type="region of interest" description="Disordered" evidence="3">
    <location>
        <begin position="43"/>
        <end position="110"/>
    </location>
</feature>
<feature type="coiled-coil region" evidence="1">
    <location>
        <begin position="112"/>
        <end position="130"/>
    </location>
</feature>
<feature type="compositionally biased region" description="Basic and acidic residues" evidence="3">
    <location>
        <begin position="49"/>
        <end position="61"/>
    </location>
</feature>
<feature type="compositionally biased region" description="Pro residues" evidence="3">
    <location>
        <begin position="75"/>
        <end position="87"/>
    </location>
</feature>
<feature type="modified residue" description="4-hydroxyproline" evidence="1">
    <location>
        <position position="47"/>
    </location>
</feature>
<feature type="modified residue" description="4-hydroxyproline" evidence="1">
    <location>
        <position position="73"/>
    </location>
</feature>
<feature type="modified residue" description="4-hydroxyproline" evidence="1">
    <location>
        <position position="79"/>
    </location>
</feature>
<feature type="modified residue" description="4-hydroxyproline" evidence="1">
    <location>
        <position position="82"/>
    </location>
</feature>
<feature type="modified residue" description="4-hydroxyproline" evidence="1">
    <location>
        <position position="88"/>
    </location>
</feature>
<feature type="disulfide bond" evidence="2">
    <location>
        <begin position="155"/>
        <end position="244"/>
    </location>
</feature>
<feature type="disulfide bond" evidence="2">
    <location>
        <begin position="222"/>
        <end position="236"/>
    </location>
</feature>
<name>MBL2_NOMCO</name>
<protein>
    <recommendedName>
        <fullName>Mannose-binding protein C</fullName>
        <shortName>MBP-C</shortName>
    </recommendedName>
    <alternativeName>
        <fullName>MBP1</fullName>
    </alternativeName>
    <alternativeName>
        <fullName>Mannan-binding protein</fullName>
    </alternativeName>
    <alternativeName>
        <fullName>Mannose-binding lectin</fullName>
    </alternativeName>
</protein>
<reference key="1">
    <citation type="journal article" date="2004" name="Genes Immun.">
        <title>Evolution of the mannose-binding lectin gene in primates.</title>
        <authorList>
            <person name="Verga Falzacappa M.V."/>
            <person name="Segat L."/>
            <person name="Puppini B."/>
            <person name="Amoroso A."/>
            <person name="Crovella S."/>
        </authorList>
    </citation>
    <scope>NUCLEOTIDE SEQUENCE [GENOMIC DNA]</scope>
</reference>
<gene>
    <name type="primary">MBL2</name>
</gene>
<organism>
    <name type="scientific">Nomascus concolor</name>
    <name type="common">Black crested gibbon</name>
    <name type="synonym">Hylobates concolor</name>
    <dbReference type="NCBI Taxonomy" id="29089"/>
    <lineage>
        <taxon>Eukaryota</taxon>
        <taxon>Metazoa</taxon>
        <taxon>Chordata</taxon>
        <taxon>Craniata</taxon>
        <taxon>Vertebrata</taxon>
        <taxon>Euteleostomi</taxon>
        <taxon>Mammalia</taxon>
        <taxon>Eutheria</taxon>
        <taxon>Euarchontoglires</taxon>
        <taxon>Primates</taxon>
        <taxon>Haplorrhini</taxon>
        <taxon>Catarrhini</taxon>
        <taxon>Hylobatidae</taxon>
        <taxon>Nomascus</taxon>
    </lineage>
</organism>
<comment type="function">
    <text evidence="1">Calcium-dependent lectin involved in innate immune defense. Binds mannose, fucose and N-acetylglucosamine on different microorganisms and activates the lectin complement pathway. Binds to late apoptotic cells, as well as to apoptotic blebs and to necrotic cells, but not to early apoptotic cells, facilitating their uptake by macrophages (By similarity).</text>
</comment>
<comment type="subunit">
    <text evidence="1">Oligomeric complex of 3 or more homotrimers. Interacts with MASP1 and MASP2 (By similarity). Interacts with MEP1A and MEP1B and may inhibit their catalytic activity (By similarity).</text>
</comment>
<comment type="subcellular location">
    <subcellularLocation>
        <location evidence="1">Secreted</location>
    </subcellularLocation>
</comment>
<comment type="domain">
    <text evidence="1">The coiled-coil domain mediates trimerization.</text>
</comment>
<comment type="PTM">
    <text evidence="1">Hydroxylation on proline residues within the sequence motif, GXPG, is most likely to be 4-hydroxy as this fits the requirement for 4-hydroxylation in vertebrates.</text>
</comment>
<keyword id="KW-0106">Calcium</keyword>
<keyword id="KW-0175">Coiled coil</keyword>
<keyword id="KW-0176">Collagen</keyword>
<keyword id="KW-1018">Complement activation lectin pathway</keyword>
<keyword id="KW-0180">Complement pathway</keyword>
<keyword id="KW-1015">Disulfide bond</keyword>
<keyword id="KW-0379">Hydroxylation</keyword>
<keyword id="KW-0391">Immunity</keyword>
<keyword id="KW-0399">Innate immunity</keyword>
<keyword id="KW-0430">Lectin</keyword>
<keyword id="KW-0465">Mannose-binding</keyword>
<keyword id="KW-0677">Repeat</keyword>
<keyword id="KW-0964">Secreted</keyword>
<keyword id="KW-0732">Signal</keyword>